<feature type="chain" id="PRO_0000177803" description="D-alanine--D-alanine ligase">
    <location>
        <begin position="1"/>
        <end position="364"/>
    </location>
</feature>
<feature type="domain" description="ATP-grasp" evidence="2">
    <location>
        <begin position="146"/>
        <end position="352"/>
    </location>
</feature>
<feature type="binding site" evidence="2">
    <location>
        <begin position="179"/>
        <end position="234"/>
    </location>
    <ligand>
        <name>ATP</name>
        <dbReference type="ChEBI" id="CHEBI:30616"/>
    </ligand>
</feature>
<feature type="binding site" evidence="2">
    <location>
        <position position="305"/>
    </location>
    <ligand>
        <name>Mg(2+)</name>
        <dbReference type="ChEBI" id="CHEBI:18420"/>
        <label>1</label>
    </ligand>
</feature>
<feature type="binding site" evidence="2">
    <location>
        <position position="319"/>
    </location>
    <ligand>
        <name>Mg(2+)</name>
        <dbReference type="ChEBI" id="CHEBI:18420"/>
        <label>1</label>
    </ligand>
</feature>
<feature type="binding site" evidence="2">
    <location>
        <position position="319"/>
    </location>
    <ligand>
        <name>Mg(2+)</name>
        <dbReference type="ChEBI" id="CHEBI:18420"/>
        <label>2</label>
    </ligand>
</feature>
<feature type="binding site" evidence="2">
    <location>
        <position position="321"/>
    </location>
    <ligand>
        <name>Mg(2+)</name>
        <dbReference type="ChEBI" id="CHEBI:18420"/>
        <label>2</label>
    </ligand>
</feature>
<gene>
    <name evidence="2" type="primary">ddl</name>
    <name type="synonym">ddlA</name>
    <name type="ordered locus">CT1345</name>
</gene>
<reference key="1">
    <citation type="journal article" date="2002" name="Proc. Natl. Acad. Sci. U.S.A.">
        <title>The complete genome sequence of Chlorobium tepidum TLS, a photosynthetic, anaerobic, green-sulfur bacterium.</title>
        <authorList>
            <person name="Eisen J.A."/>
            <person name="Nelson K.E."/>
            <person name="Paulsen I.T."/>
            <person name="Heidelberg J.F."/>
            <person name="Wu M."/>
            <person name="Dodson R.J."/>
            <person name="DeBoy R.T."/>
            <person name="Gwinn M.L."/>
            <person name="Nelson W.C."/>
            <person name="Haft D.H."/>
            <person name="Hickey E.K."/>
            <person name="Peterson J.D."/>
            <person name="Durkin A.S."/>
            <person name="Kolonay J.F."/>
            <person name="Yang F."/>
            <person name="Holt I.E."/>
            <person name="Umayam L.A."/>
            <person name="Mason T.M."/>
            <person name="Brenner M."/>
            <person name="Shea T.P."/>
            <person name="Parksey D.S."/>
            <person name="Nierman W.C."/>
            <person name="Feldblyum T.V."/>
            <person name="Hansen C.L."/>
            <person name="Craven M.B."/>
            <person name="Radune D."/>
            <person name="Vamathevan J.J."/>
            <person name="Khouri H.M."/>
            <person name="White O."/>
            <person name="Gruber T.M."/>
            <person name="Ketchum K.A."/>
            <person name="Venter J.C."/>
            <person name="Tettelin H."/>
            <person name="Bryant D.A."/>
            <person name="Fraser C.M."/>
        </authorList>
    </citation>
    <scope>NUCLEOTIDE SEQUENCE [LARGE SCALE GENOMIC DNA]</scope>
    <source>
        <strain>ATCC 49652 / DSM 12025 / NBRC 103806 / TLS</strain>
    </source>
</reference>
<organism>
    <name type="scientific">Chlorobaculum tepidum (strain ATCC 49652 / DSM 12025 / NBRC 103806 / TLS)</name>
    <name type="common">Chlorobium tepidum</name>
    <dbReference type="NCBI Taxonomy" id="194439"/>
    <lineage>
        <taxon>Bacteria</taxon>
        <taxon>Pseudomonadati</taxon>
        <taxon>Chlorobiota</taxon>
        <taxon>Chlorobiia</taxon>
        <taxon>Chlorobiales</taxon>
        <taxon>Chlorobiaceae</taxon>
        <taxon>Chlorobaculum</taxon>
    </lineage>
</organism>
<proteinExistence type="inferred from homology"/>
<sequence>MSKQTVALFFGGKSAEHEISIISARSIAAQIDRNRYELSPLYIDRDGKWHASECSQQVLDTDIAALLRSGTPESAGKRLDELTAAAAGECFDFGSFLKNTDVAFIALHGSYGEDGKLQGCLDTFGIPYTGCGLTASALAMDKVLTKLCAMNAGIAVAEFMTITSCAYMANPLETIVEITKRFDWPLFVKPASLGSSVGISKVRNAEELAAALENACGLDSKALVEAAISGREIEVAVLGNSDPLASEPGEIIPGSDFYSYEDKYIKNEAKIVIPADLPEGVAEEVRKAALTVFKALGCEGMARVDFFVENGTNRVILNEINTIPGFTDISMYPMMMAASGIGFAELVEKLLLLALEKRSITHKI</sequence>
<name>DDL_CHLTE</name>
<protein>
    <recommendedName>
        <fullName evidence="2">D-alanine--D-alanine ligase</fullName>
        <ecNumber evidence="2">6.3.2.4</ecNumber>
    </recommendedName>
    <alternativeName>
        <fullName evidence="2">D-Ala-D-Ala ligase</fullName>
    </alternativeName>
    <alternativeName>
        <fullName evidence="2">D-alanylalanine synthetase</fullName>
    </alternativeName>
</protein>
<evidence type="ECO:0000250" key="1"/>
<evidence type="ECO:0000255" key="2">
    <source>
        <dbReference type="HAMAP-Rule" id="MF_00047"/>
    </source>
</evidence>
<comment type="function">
    <text evidence="2">Cell wall formation.</text>
</comment>
<comment type="catalytic activity">
    <reaction evidence="2">
        <text>2 D-alanine + ATP = D-alanyl-D-alanine + ADP + phosphate + H(+)</text>
        <dbReference type="Rhea" id="RHEA:11224"/>
        <dbReference type="ChEBI" id="CHEBI:15378"/>
        <dbReference type="ChEBI" id="CHEBI:30616"/>
        <dbReference type="ChEBI" id="CHEBI:43474"/>
        <dbReference type="ChEBI" id="CHEBI:57416"/>
        <dbReference type="ChEBI" id="CHEBI:57822"/>
        <dbReference type="ChEBI" id="CHEBI:456216"/>
        <dbReference type="EC" id="6.3.2.4"/>
    </reaction>
</comment>
<comment type="cofactor">
    <cofactor evidence="1">
        <name>Mg(2+)</name>
        <dbReference type="ChEBI" id="CHEBI:18420"/>
    </cofactor>
    <cofactor evidence="1">
        <name>Mn(2+)</name>
        <dbReference type="ChEBI" id="CHEBI:29035"/>
    </cofactor>
    <text evidence="1">Binds 2 magnesium or manganese ions per subunit.</text>
</comment>
<comment type="pathway">
    <text evidence="2">Cell wall biogenesis; peptidoglycan biosynthesis.</text>
</comment>
<comment type="subcellular location">
    <subcellularLocation>
        <location evidence="2">Cytoplasm</location>
    </subcellularLocation>
</comment>
<comment type="similarity">
    <text evidence="2">Belongs to the D-alanine--D-alanine ligase family.</text>
</comment>
<accession>Q8KCR8</accession>
<keyword id="KW-0067">ATP-binding</keyword>
<keyword id="KW-0133">Cell shape</keyword>
<keyword id="KW-0961">Cell wall biogenesis/degradation</keyword>
<keyword id="KW-0963">Cytoplasm</keyword>
<keyword id="KW-0436">Ligase</keyword>
<keyword id="KW-0460">Magnesium</keyword>
<keyword id="KW-0464">Manganese</keyword>
<keyword id="KW-0479">Metal-binding</keyword>
<keyword id="KW-0547">Nucleotide-binding</keyword>
<keyword id="KW-0573">Peptidoglycan synthesis</keyword>
<keyword id="KW-1185">Reference proteome</keyword>
<dbReference type="EC" id="6.3.2.4" evidence="2"/>
<dbReference type="EMBL" id="AE006470">
    <property type="protein sequence ID" value="AAM72574.1"/>
    <property type="molecule type" value="Genomic_DNA"/>
</dbReference>
<dbReference type="RefSeq" id="NP_662232.1">
    <property type="nucleotide sequence ID" value="NC_002932.3"/>
</dbReference>
<dbReference type="RefSeq" id="WP_010933013.1">
    <property type="nucleotide sequence ID" value="NC_002932.3"/>
</dbReference>
<dbReference type="SMR" id="Q8KCR8"/>
<dbReference type="STRING" id="194439.CT1345"/>
<dbReference type="EnsemblBacteria" id="AAM72574">
    <property type="protein sequence ID" value="AAM72574"/>
    <property type="gene ID" value="CT1345"/>
</dbReference>
<dbReference type="KEGG" id="cte:CT1345"/>
<dbReference type="PATRIC" id="fig|194439.7.peg.1224"/>
<dbReference type="eggNOG" id="COG1181">
    <property type="taxonomic scope" value="Bacteria"/>
</dbReference>
<dbReference type="HOGENOM" id="CLU_039268_0_1_10"/>
<dbReference type="OrthoDB" id="9813261at2"/>
<dbReference type="UniPathway" id="UPA00219"/>
<dbReference type="Proteomes" id="UP000001007">
    <property type="component" value="Chromosome"/>
</dbReference>
<dbReference type="GO" id="GO:0005829">
    <property type="term" value="C:cytosol"/>
    <property type="evidence" value="ECO:0007669"/>
    <property type="project" value="TreeGrafter"/>
</dbReference>
<dbReference type="GO" id="GO:0005524">
    <property type="term" value="F:ATP binding"/>
    <property type="evidence" value="ECO:0007669"/>
    <property type="project" value="UniProtKB-KW"/>
</dbReference>
<dbReference type="GO" id="GO:0008716">
    <property type="term" value="F:D-alanine-D-alanine ligase activity"/>
    <property type="evidence" value="ECO:0007669"/>
    <property type="project" value="UniProtKB-UniRule"/>
</dbReference>
<dbReference type="GO" id="GO:0046872">
    <property type="term" value="F:metal ion binding"/>
    <property type="evidence" value="ECO:0007669"/>
    <property type="project" value="UniProtKB-KW"/>
</dbReference>
<dbReference type="GO" id="GO:0071555">
    <property type="term" value="P:cell wall organization"/>
    <property type="evidence" value="ECO:0007669"/>
    <property type="project" value="UniProtKB-KW"/>
</dbReference>
<dbReference type="GO" id="GO:0009252">
    <property type="term" value="P:peptidoglycan biosynthetic process"/>
    <property type="evidence" value="ECO:0007669"/>
    <property type="project" value="UniProtKB-UniRule"/>
</dbReference>
<dbReference type="GO" id="GO:0008360">
    <property type="term" value="P:regulation of cell shape"/>
    <property type="evidence" value="ECO:0007669"/>
    <property type="project" value="UniProtKB-KW"/>
</dbReference>
<dbReference type="FunFam" id="3.30.470.20:FF:000008">
    <property type="entry name" value="D-alanine--D-alanine ligase"/>
    <property type="match status" value="1"/>
</dbReference>
<dbReference type="Gene3D" id="3.40.50.20">
    <property type="match status" value="1"/>
</dbReference>
<dbReference type="Gene3D" id="3.30.1490.20">
    <property type="entry name" value="ATP-grasp fold, A domain"/>
    <property type="match status" value="1"/>
</dbReference>
<dbReference type="Gene3D" id="3.30.470.20">
    <property type="entry name" value="ATP-grasp fold, B domain"/>
    <property type="match status" value="1"/>
</dbReference>
<dbReference type="HAMAP" id="MF_00047">
    <property type="entry name" value="Dala_Dala_lig"/>
    <property type="match status" value="1"/>
</dbReference>
<dbReference type="InterPro" id="IPR011761">
    <property type="entry name" value="ATP-grasp"/>
</dbReference>
<dbReference type="InterPro" id="IPR013815">
    <property type="entry name" value="ATP_grasp_subdomain_1"/>
</dbReference>
<dbReference type="InterPro" id="IPR000291">
    <property type="entry name" value="D-Ala_lig_Van_CS"/>
</dbReference>
<dbReference type="InterPro" id="IPR005905">
    <property type="entry name" value="D_ala_D_ala"/>
</dbReference>
<dbReference type="InterPro" id="IPR011095">
    <property type="entry name" value="Dala_Dala_lig_C"/>
</dbReference>
<dbReference type="InterPro" id="IPR011127">
    <property type="entry name" value="Dala_Dala_lig_N"/>
</dbReference>
<dbReference type="InterPro" id="IPR016185">
    <property type="entry name" value="PreATP-grasp_dom_sf"/>
</dbReference>
<dbReference type="NCBIfam" id="TIGR01205">
    <property type="entry name" value="D_ala_D_alaTIGR"/>
    <property type="match status" value="1"/>
</dbReference>
<dbReference type="NCBIfam" id="NF002378">
    <property type="entry name" value="PRK01372.1"/>
    <property type="match status" value="1"/>
</dbReference>
<dbReference type="NCBIfam" id="NF002528">
    <property type="entry name" value="PRK01966.1-4"/>
    <property type="match status" value="1"/>
</dbReference>
<dbReference type="PANTHER" id="PTHR23132">
    <property type="entry name" value="D-ALANINE--D-ALANINE LIGASE"/>
    <property type="match status" value="1"/>
</dbReference>
<dbReference type="PANTHER" id="PTHR23132:SF25">
    <property type="entry name" value="D-ALANINE--D-ALANINE LIGASE A"/>
    <property type="match status" value="1"/>
</dbReference>
<dbReference type="Pfam" id="PF07478">
    <property type="entry name" value="Dala_Dala_lig_C"/>
    <property type="match status" value="1"/>
</dbReference>
<dbReference type="Pfam" id="PF01820">
    <property type="entry name" value="Dala_Dala_lig_N"/>
    <property type="match status" value="1"/>
</dbReference>
<dbReference type="PIRSF" id="PIRSF039102">
    <property type="entry name" value="Ddl/VanB"/>
    <property type="match status" value="1"/>
</dbReference>
<dbReference type="SUPFAM" id="SSF56059">
    <property type="entry name" value="Glutathione synthetase ATP-binding domain-like"/>
    <property type="match status" value="1"/>
</dbReference>
<dbReference type="SUPFAM" id="SSF52440">
    <property type="entry name" value="PreATP-grasp domain"/>
    <property type="match status" value="1"/>
</dbReference>
<dbReference type="PROSITE" id="PS50975">
    <property type="entry name" value="ATP_GRASP"/>
    <property type="match status" value="1"/>
</dbReference>
<dbReference type="PROSITE" id="PS00843">
    <property type="entry name" value="DALA_DALA_LIGASE_1"/>
    <property type="match status" value="1"/>
</dbReference>
<dbReference type="PROSITE" id="PS00844">
    <property type="entry name" value="DALA_DALA_LIGASE_2"/>
    <property type="match status" value="1"/>
</dbReference>